<protein>
    <recommendedName>
        <fullName evidence="1">Phosphatidylglycerol--prolipoprotein diacylglyceryl transferase</fullName>
        <ecNumber evidence="1">2.5.1.145</ecNumber>
    </recommendedName>
</protein>
<reference key="1">
    <citation type="journal article" date="2008" name="J. Bacteriol.">
        <title>The complete genome sequence of Escherichia coli DH10B: insights into the biology of a laboratory workhorse.</title>
        <authorList>
            <person name="Durfee T."/>
            <person name="Nelson R."/>
            <person name="Baldwin S."/>
            <person name="Plunkett G. III"/>
            <person name="Burland V."/>
            <person name="Mau B."/>
            <person name="Petrosino J.F."/>
            <person name="Qin X."/>
            <person name="Muzny D.M."/>
            <person name="Ayele M."/>
            <person name="Gibbs R.A."/>
            <person name="Csorgo B."/>
            <person name="Posfai G."/>
            <person name="Weinstock G.M."/>
            <person name="Blattner F.R."/>
        </authorList>
    </citation>
    <scope>NUCLEOTIDE SEQUENCE [LARGE SCALE GENOMIC DNA]</scope>
    <source>
        <strain>K12 / DH10B</strain>
    </source>
</reference>
<accession>B1XDN4</accession>
<comment type="function">
    <text evidence="1">Catalyzes the transfer of the diacylglyceryl group from phosphatidylglycerol to the sulfhydryl group of the N-terminal cysteine of a prolipoprotein, the first step in the formation of mature lipoproteins.</text>
</comment>
<comment type="catalytic activity">
    <reaction evidence="1">
        <text>L-cysteinyl-[prolipoprotein] + a 1,2-diacyl-sn-glycero-3-phospho-(1'-sn-glycerol) = an S-1,2-diacyl-sn-glyceryl-L-cysteinyl-[prolipoprotein] + sn-glycerol 1-phosphate + H(+)</text>
        <dbReference type="Rhea" id="RHEA:56712"/>
        <dbReference type="Rhea" id="RHEA-COMP:14679"/>
        <dbReference type="Rhea" id="RHEA-COMP:14680"/>
        <dbReference type="ChEBI" id="CHEBI:15378"/>
        <dbReference type="ChEBI" id="CHEBI:29950"/>
        <dbReference type="ChEBI" id="CHEBI:57685"/>
        <dbReference type="ChEBI" id="CHEBI:64716"/>
        <dbReference type="ChEBI" id="CHEBI:140658"/>
        <dbReference type="EC" id="2.5.1.145"/>
    </reaction>
</comment>
<comment type="pathway">
    <text evidence="1">Protein modification; lipoprotein biosynthesis (diacylglyceryl transfer).</text>
</comment>
<comment type="subcellular location">
    <subcellularLocation>
        <location evidence="1">Cell inner membrane</location>
        <topology evidence="1">Multi-pass membrane protein</topology>
    </subcellularLocation>
</comment>
<comment type="similarity">
    <text evidence="1">Belongs to the Lgt family.</text>
</comment>
<dbReference type="EC" id="2.5.1.145" evidence="1"/>
<dbReference type="EMBL" id="CP000948">
    <property type="protein sequence ID" value="ACB03938.1"/>
    <property type="molecule type" value="Genomic_DNA"/>
</dbReference>
<dbReference type="RefSeq" id="WP_000204658.1">
    <property type="nucleotide sequence ID" value="NC_010473.1"/>
</dbReference>
<dbReference type="SMR" id="B1XDN4"/>
<dbReference type="GeneID" id="93779170"/>
<dbReference type="KEGG" id="ecd:ECDH10B_2998"/>
<dbReference type="HOGENOM" id="CLU_013386_1_0_6"/>
<dbReference type="UniPathway" id="UPA00664"/>
<dbReference type="GO" id="GO:0005886">
    <property type="term" value="C:plasma membrane"/>
    <property type="evidence" value="ECO:0007669"/>
    <property type="project" value="UniProtKB-SubCell"/>
</dbReference>
<dbReference type="GO" id="GO:0008961">
    <property type="term" value="F:phosphatidylglycerol-prolipoprotein diacylglyceryl transferase activity"/>
    <property type="evidence" value="ECO:0007669"/>
    <property type="project" value="UniProtKB-UniRule"/>
</dbReference>
<dbReference type="GO" id="GO:0042158">
    <property type="term" value="P:lipoprotein biosynthetic process"/>
    <property type="evidence" value="ECO:0007669"/>
    <property type="project" value="UniProtKB-UniRule"/>
</dbReference>
<dbReference type="HAMAP" id="MF_01147">
    <property type="entry name" value="Lgt"/>
    <property type="match status" value="1"/>
</dbReference>
<dbReference type="InterPro" id="IPR001640">
    <property type="entry name" value="Lgt"/>
</dbReference>
<dbReference type="NCBIfam" id="TIGR00544">
    <property type="entry name" value="lgt"/>
    <property type="match status" value="1"/>
</dbReference>
<dbReference type="PANTHER" id="PTHR30589:SF0">
    <property type="entry name" value="PHOSPHATIDYLGLYCEROL--PROLIPOPROTEIN DIACYLGLYCERYL TRANSFERASE"/>
    <property type="match status" value="1"/>
</dbReference>
<dbReference type="PANTHER" id="PTHR30589">
    <property type="entry name" value="PROLIPOPROTEIN DIACYLGLYCERYL TRANSFERASE"/>
    <property type="match status" value="1"/>
</dbReference>
<dbReference type="Pfam" id="PF01790">
    <property type="entry name" value="LGT"/>
    <property type="match status" value="1"/>
</dbReference>
<dbReference type="PROSITE" id="PS01311">
    <property type="entry name" value="LGT"/>
    <property type="match status" value="1"/>
</dbReference>
<keyword id="KW-0997">Cell inner membrane</keyword>
<keyword id="KW-1003">Cell membrane</keyword>
<keyword id="KW-0472">Membrane</keyword>
<keyword id="KW-0808">Transferase</keyword>
<keyword id="KW-0812">Transmembrane</keyword>
<keyword id="KW-1133">Transmembrane helix</keyword>
<organism>
    <name type="scientific">Escherichia coli (strain K12 / DH10B)</name>
    <dbReference type="NCBI Taxonomy" id="316385"/>
    <lineage>
        <taxon>Bacteria</taxon>
        <taxon>Pseudomonadati</taxon>
        <taxon>Pseudomonadota</taxon>
        <taxon>Gammaproteobacteria</taxon>
        <taxon>Enterobacterales</taxon>
        <taxon>Enterobacteriaceae</taxon>
        <taxon>Escherichia</taxon>
    </lineage>
</organism>
<sequence length="291" mass="33108">MTSSYLHFPEFDPVIFSIGPVALHWYGLMYLVGFIFAMWLATRRANRPGSGWTKNEVENLLYAGFLGVFLGGRIGYVLFYNFPQFMADPLYLFRVWDGGMSFHGGLIGVIVVMIIFARRTKRSFFQVSDFIAPLIPFGLGAGRLGNFINGELWGRVDPNFPFAMLFPGSRTEDILLLQTNPQWQSIFDTYGVLPRHPSQLYELLLEGVVLFIILNLYIRKPRPMGAVSGLFLIGYGAFRIIVEFFRQPDAQFTGAWVQYISMGQILSIPMIVAGVIMMVWAYRRSPQQHVS</sequence>
<feature type="chain" id="PRO_1000137424" description="Phosphatidylglycerol--prolipoprotein diacylglyceryl transferase">
    <location>
        <begin position="1"/>
        <end position="291"/>
    </location>
</feature>
<feature type="transmembrane region" description="Helical" evidence="1">
    <location>
        <begin position="21"/>
        <end position="41"/>
    </location>
</feature>
<feature type="transmembrane region" description="Helical" evidence="1">
    <location>
        <begin position="60"/>
        <end position="80"/>
    </location>
</feature>
<feature type="transmembrane region" description="Helical" evidence="1">
    <location>
        <begin position="96"/>
        <end position="116"/>
    </location>
</feature>
<feature type="transmembrane region" description="Helical" evidence="1">
    <location>
        <begin position="225"/>
        <end position="245"/>
    </location>
</feature>
<feature type="transmembrane region" description="Helical" evidence="1">
    <location>
        <begin position="260"/>
        <end position="280"/>
    </location>
</feature>
<feature type="binding site" evidence="1">
    <location>
        <position position="143"/>
    </location>
    <ligand>
        <name>a 1,2-diacyl-sn-glycero-3-phospho-(1'-sn-glycerol)</name>
        <dbReference type="ChEBI" id="CHEBI:64716"/>
    </ligand>
</feature>
<evidence type="ECO:0000255" key="1">
    <source>
        <dbReference type="HAMAP-Rule" id="MF_01147"/>
    </source>
</evidence>
<gene>
    <name evidence="1" type="primary">lgt</name>
    <name type="ordered locus">ECDH10B_2998</name>
</gene>
<proteinExistence type="inferred from homology"/>
<name>LGT_ECODH</name>